<comment type="subcellular location">
    <subcellularLocation>
        <location evidence="1">Cell inner membrane</location>
        <topology evidence="1">Multi-pass membrane protein</topology>
    </subcellularLocation>
</comment>
<comment type="similarity">
    <text evidence="1">Belongs to the UPF0060 family.</text>
</comment>
<comment type="sequence caution" evidence="2">
    <conflict type="erroneous initiation">
        <sequence resource="EMBL-CDS" id="ABN85242"/>
    </conflict>
</comment>
<feature type="chain" id="PRO_0000321580" description="UPF0060 membrane protein BURPS668_1464">
    <location>
        <begin position="1"/>
        <end position="110"/>
    </location>
</feature>
<feature type="transmembrane region" description="Helical" evidence="1">
    <location>
        <begin position="9"/>
        <end position="29"/>
    </location>
</feature>
<feature type="transmembrane region" description="Helical" evidence="1">
    <location>
        <begin position="34"/>
        <end position="54"/>
    </location>
</feature>
<feature type="transmembrane region" description="Helical" evidence="1">
    <location>
        <begin position="64"/>
        <end position="84"/>
    </location>
</feature>
<feature type="transmembrane region" description="Helical" evidence="1">
    <location>
        <begin position="86"/>
        <end position="106"/>
    </location>
</feature>
<name>Y1464_BURP6</name>
<gene>
    <name type="ordered locus">BURPS668_1464</name>
</gene>
<sequence length="110" mass="11439">MLSLAKIAALFVLTAVAEIVGCYLPWLVLKAGKPAWLLAPAALSLALFAWLLTLHPAAAARTYAAYGGVYIAVALAWLRIVDGVPLSRWDVAGAALALAGMSVIALQPRG</sequence>
<organism>
    <name type="scientific">Burkholderia pseudomallei (strain 668)</name>
    <dbReference type="NCBI Taxonomy" id="320373"/>
    <lineage>
        <taxon>Bacteria</taxon>
        <taxon>Pseudomonadati</taxon>
        <taxon>Pseudomonadota</taxon>
        <taxon>Betaproteobacteria</taxon>
        <taxon>Burkholderiales</taxon>
        <taxon>Burkholderiaceae</taxon>
        <taxon>Burkholderia</taxon>
        <taxon>pseudomallei group</taxon>
    </lineage>
</organism>
<evidence type="ECO:0000255" key="1">
    <source>
        <dbReference type="HAMAP-Rule" id="MF_00010"/>
    </source>
</evidence>
<evidence type="ECO:0000305" key="2"/>
<keyword id="KW-0997">Cell inner membrane</keyword>
<keyword id="KW-1003">Cell membrane</keyword>
<keyword id="KW-0472">Membrane</keyword>
<keyword id="KW-0812">Transmembrane</keyword>
<keyword id="KW-1133">Transmembrane helix</keyword>
<reference key="1">
    <citation type="journal article" date="2010" name="Genome Biol. Evol.">
        <title>Continuing evolution of Burkholderia mallei through genome reduction and large-scale rearrangements.</title>
        <authorList>
            <person name="Losada L."/>
            <person name="Ronning C.M."/>
            <person name="DeShazer D."/>
            <person name="Woods D."/>
            <person name="Fedorova N."/>
            <person name="Kim H.S."/>
            <person name="Shabalina S.A."/>
            <person name="Pearson T.R."/>
            <person name="Brinkac L."/>
            <person name="Tan P."/>
            <person name="Nandi T."/>
            <person name="Crabtree J."/>
            <person name="Badger J."/>
            <person name="Beckstrom-Sternberg S."/>
            <person name="Saqib M."/>
            <person name="Schutzer S.E."/>
            <person name="Keim P."/>
            <person name="Nierman W.C."/>
        </authorList>
    </citation>
    <scope>NUCLEOTIDE SEQUENCE [LARGE SCALE GENOMIC DNA]</scope>
    <source>
        <strain>668</strain>
    </source>
</reference>
<accession>A3N836</accession>
<protein>
    <recommendedName>
        <fullName evidence="1">UPF0060 membrane protein BURPS668_1464</fullName>
    </recommendedName>
</protein>
<dbReference type="EMBL" id="CP000570">
    <property type="protein sequence ID" value="ABN85242.1"/>
    <property type="status" value="ALT_INIT"/>
    <property type="molecule type" value="Genomic_DNA"/>
</dbReference>
<dbReference type="RefSeq" id="WP_004193459.1">
    <property type="nucleotide sequence ID" value="NC_009074.1"/>
</dbReference>
<dbReference type="SMR" id="A3N836"/>
<dbReference type="KEGG" id="bpd:BURPS668_1464"/>
<dbReference type="HOGENOM" id="CLU_117653_2_0_4"/>
<dbReference type="GO" id="GO:0005886">
    <property type="term" value="C:plasma membrane"/>
    <property type="evidence" value="ECO:0007669"/>
    <property type="project" value="UniProtKB-SubCell"/>
</dbReference>
<dbReference type="HAMAP" id="MF_00010">
    <property type="entry name" value="UPF0060"/>
    <property type="match status" value="1"/>
</dbReference>
<dbReference type="InterPro" id="IPR003844">
    <property type="entry name" value="UPF0060"/>
</dbReference>
<dbReference type="NCBIfam" id="NF002586">
    <property type="entry name" value="PRK02237.1"/>
    <property type="match status" value="1"/>
</dbReference>
<dbReference type="PANTHER" id="PTHR36116">
    <property type="entry name" value="UPF0060 MEMBRANE PROTEIN YNFA"/>
    <property type="match status" value="1"/>
</dbReference>
<dbReference type="PANTHER" id="PTHR36116:SF1">
    <property type="entry name" value="UPF0060 MEMBRANE PROTEIN YNFA"/>
    <property type="match status" value="1"/>
</dbReference>
<dbReference type="Pfam" id="PF02694">
    <property type="entry name" value="UPF0060"/>
    <property type="match status" value="1"/>
</dbReference>
<dbReference type="SUPFAM" id="SSF103481">
    <property type="entry name" value="Multidrug resistance efflux transporter EmrE"/>
    <property type="match status" value="1"/>
</dbReference>
<proteinExistence type="inferred from homology"/>